<proteinExistence type="inferred from homology"/>
<protein>
    <recommendedName>
        <fullName evidence="1">Alanine--tRNA ligase</fullName>
        <ecNumber evidence="1">6.1.1.7</ecNumber>
    </recommendedName>
    <alternativeName>
        <fullName evidence="1">Alanyl-tRNA synthetase</fullName>
        <shortName evidence="1">AlaRS</shortName>
    </alternativeName>
</protein>
<comment type="function">
    <text evidence="1">Catalyzes the attachment of alanine to tRNA(Ala) in a two-step reaction: alanine is first activated by ATP to form Ala-AMP and then transferred to the acceptor end of tRNA(Ala). Also edits incorrectly charged Ser-tRNA(Ala) and Gly-tRNA(Ala) via its editing domain.</text>
</comment>
<comment type="catalytic activity">
    <reaction evidence="1">
        <text>tRNA(Ala) + L-alanine + ATP = L-alanyl-tRNA(Ala) + AMP + diphosphate</text>
        <dbReference type="Rhea" id="RHEA:12540"/>
        <dbReference type="Rhea" id="RHEA-COMP:9657"/>
        <dbReference type="Rhea" id="RHEA-COMP:9923"/>
        <dbReference type="ChEBI" id="CHEBI:30616"/>
        <dbReference type="ChEBI" id="CHEBI:33019"/>
        <dbReference type="ChEBI" id="CHEBI:57972"/>
        <dbReference type="ChEBI" id="CHEBI:78442"/>
        <dbReference type="ChEBI" id="CHEBI:78497"/>
        <dbReference type="ChEBI" id="CHEBI:456215"/>
        <dbReference type="EC" id="6.1.1.7"/>
    </reaction>
</comment>
<comment type="cofactor">
    <cofactor evidence="1">
        <name>Zn(2+)</name>
        <dbReference type="ChEBI" id="CHEBI:29105"/>
    </cofactor>
    <text evidence="1">Binds 1 zinc ion per subunit.</text>
</comment>
<comment type="subcellular location">
    <subcellularLocation>
        <location evidence="1">Cytoplasm</location>
    </subcellularLocation>
</comment>
<comment type="domain">
    <text evidence="1">Consists of three domains; the N-terminal catalytic domain, the editing domain and the C-terminal C-Ala domain. The editing domain removes incorrectly charged amino acids, while the C-Ala domain, along with tRNA(Ala), serves as a bridge to cooperatively bring together the editing and aminoacylation centers thus stimulating deacylation of misacylated tRNAs.</text>
</comment>
<comment type="similarity">
    <text evidence="1">Belongs to the class-II aminoacyl-tRNA synthetase family.</text>
</comment>
<gene>
    <name evidence="1" type="primary">alaS</name>
    <name type="ordered locus">SO_3428</name>
</gene>
<sequence>MYQTTAALRSAFLEFFRSNGHQVVDSSSLVPGNDPTLLFTNAGMNQFKDVFLGMDKRSYTRATTAQRCVRAGGKHNDLDNVGYTARHHTFFEMLGNFSFGDYFKEDAIRFGWTFLTEVLMLPKERLCVTIYQTDDEAFEIWNKKIGVAAENIIRIGDNKGAPYASDNFWQMGDTGPCGPCTEIFYDHGDHIWGGRPGSPEEDGDRFIEIWNIVFMQYNRQASGEMLPLPKPSVDTGMGIERIAAIMQGVHSNYEIDIFRALIAKAAEIIGVADLSNKSLRVIADHIRSCAFLVADGVMPSNEGRGYVLRRIIRRAVRHGNKLGATEAFFYKLVPTLIDVMGDAAKGLAETQVIVEKALKAEEEQFARTLERGLGILDSALNELQGDTLDGETVFKLYDTYGFPVDLTADVCRERNIIVDEAGFEAAMAEQRSRAQAAGNFGADYNAALKIDAETAFCGYSELTGNAKVTALYLNGESVPAINTGDDAVVVLDVTPFYAESGGQVGDKGVLMAQGIEFTVNDTQKFGQASGHKGTLTAGSLSVGQVLEAKVDKKLRHRTQLNHSVTHLLHAALRQVLGTHVTQKGSLVDPERLRFDFSHFEAVKPFELKQVEELVNTQIRRNHELKVAEMAIDEAKEKGAMALFGEKYDSQVRVVTMGDFSIELCGGTHVGRTGDIGLFKITSEGGIAAGVRRIEAVTGAAAMAYVAQQQAELEEAASLLKADAHSVVTKLKVQLDKMKQLEKEMQQLKDKLAAAASADLAGDAVVVNGVNVLIKKLEGVEAGALRGLQDELKQKLKSAIIVLGVAQEGKVNLIAGVSNDLIAKIKAGELVAMVATQVGGKGGGRPDMAQAGGSQPENLDAALSQVLPWITERLA</sequence>
<reference key="1">
    <citation type="journal article" date="2002" name="Nat. Biotechnol.">
        <title>Genome sequence of the dissimilatory metal ion-reducing bacterium Shewanella oneidensis.</title>
        <authorList>
            <person name="Heidelberg J.F."/>
            <person name="Paulsen I.T."/>
            <person name="Nelson K.E."/>
            <person name="Gaidos E.J."/>
            <person name="Nelson W.C."/>
            <person name="Read T.D."/>
            <person name="Eisen J.A."/>
            <person name="Seshadri R."/>
            <person name="Ward N.L."/>
            <person name="Methe B.A."/>
            <person name="Clayton R.A."/>
            <person name="Meyer T."/>
            <person name="Tsapin A."/>
            <person name="Scott J."/>
            <person name="Beanan M.J."/>
            <person name="Brinkac L.M."/>
            <person name="Daugherty S.C."/>
            <person name="DeBoy R.T."/>
            <person name="Dodson R.J."/>
            <person name="Durkin A.S."/>
            <person name="Haft D.H."/>
            <person name="Kolonay J.F."/>
            <person name="Madupu R."/>
            <person name="Peterson J.D."/>
            <person name="Umayam L.A."/>
            <person name="White O."/>
            <person name="Wolf A.M."/>
            <person name="Vamathevan J.J."/>
            <person name="Weidman J.F."/>
            <person name="Impraim M."/>
            <person name="Lee K."/>
            <person name="Berry K.J."/>
            <person name="Lee C."/>
            <person name="Mueller J."/>
            <person name="Khouri H.M."/>
            <person name="Gill J."/>
            <person name="Utterback T.R."/>
            <person name="McDonald L.A."/>
            <person name="Feldblyum T.V."/>
            <person name="Smith H.O."/>
            <person name="Venter J.C."/>
            <person name="Nealson K.H."/>
            <person name="Fraser C.M."/>
        </authorList>
    </citation>
    <scope>NUCLEOTIDE SEQUENCE [LARGE SCALE GENOMIC DNA]</scope>
    <source>
        <strain>ATCC 700550 / JCM 31522 / CIP 106686 / LMG 19005 / NCIMB 14063 / MR-1</strain>
    </source>
</reference>
<organism>
    <name type="scientific">Shewanella oneidensis (strain ATCC 700550 / JCM 31522 / CIP 106686 / LMG 19005 / NCIMB 14063 / MR-1)</name>
    <dbReference type="NCBI Taxonomy" id="211586"/>
    <lineage>
        <taxon>Bacteria</taxon>
        <taxon>Pseudomonadati</taxon>
        <taxon>Pseudomonadota</taxon>
        <taxon>Gammaproteobacteria</taxon>
        <taxon>Alteromonadales</taxon>
        <taxon>Shewanellaceae</taxon>
        <taxon>Shewanella</taxon>
    </lineage>
</organism>
<evidence type="ECO:0000255" key="1">
    <source>
        <dbReference type="HAMAP-Rule" id="MF_00036"/>
    </source>
</evidence>
<keyword id="KW-0030">Aminoacyl-tRNA synthetase</keyword>
<keyword id="KW-0067">ATP-binding</keyword>
<keyword id="KW-0963">Cytoplasm</keyword>
<keyword id="KW-0436">Ligase</keyword>
<keyword id="KW-0479">Metal-binding</keyword>
<keyword id="KW-0547">Nucleotide-binding</keyword>
<keyword id="KW-0648">Protein biosynthesis</keyword>
<keyword id="KW-1185">Reference proteome</keyword>
<keyword id="KW-0694">RNA-binding</keyword>
<keyword id="KW-0820">tRNA-binding</keyword>
<keyword id="KW-0862">Zinc</keyword>
<feature type="chain" id="PRO_0000075198" description="Alanine--tRNA ligase">
    <location>
        <begin position="1"/>
        <end position="874"/>
    </location>
</feature>
<feature type="binding site" evidence="1">
    <location>
        <position position="562"/>
    </location>
    <ligand>
        <name>Zn(2+)</name>
        <dbReference type="ChEBI" id="CHEBI:29105"/>
    </ligand>
</feature>
<feature type="binding site" evidence="1">
    <location>
        <position position="566"/>
    </location>
    <ligand>
        <name>Zn(2+)</name>
        <dbReference type="ChEBI" id="CHEBI:29105"/>
    </ligand>
</feature>
<feature type="binding site" evidence="1">
    <location>
        <position position="664"/>
    </location>
    <ligand>
        <name>Zn(2+)</name>
        <dbReference type="ChEBI" id="CHEBI:29105"/>
    </ligand>
</feature>
<feature type="binding site" evidence="1">
    <location>
        <position position="668"/>
    </location>
    <ligand>
        <name>Zn(2+)</name>
        <dbReference type="ChEBI" id="CHEBI:29105"/>
    </ligand>
</feature>
<dbReference type="EC" id="6.1.1.7" evidence="1"/>
<dbReference type="EMBL" id="AE014299">
    <property type="protein sequence ID" value="AAN56425.1"/>
    <property type="molecule type" value="Genomic_DNA"/>
</dbReference>
<dbReference type="RefSeq" id="NP_718981.1">
    <property type="nucleotide sequence ID" value="NC_004347.2"/>
</dbReference>
<dbReference type="RefSeq" id="WP_011073284.1">
    <property type="nucleotide sequence ID" value="NC_004347.2"/>
</dbReference>
<dbReference type="SMR" id="Q8EBS1"/>
<dbReference type="STRING" id="211586.SO_3428"/>
<dbReference type="PaxDb" id="211586-SO_3428"/>
<dbReference type="KEGG" id="son:SO_3428"/>
<dbReference type="PATRIC" id="fig|211586.12.peg.3323"/>
<dbReference type="eggNOG" id="COG0013">
    <property type="taxonomic scope" value="Bacteria"/>
</dbReference>
<dbReference type="HOGENOM" id="CLU_004485_1_1_6"/>
<dbReference type="OrthoDB" id="9803884at2"/>
<dbReference type="PhylomeDB" id="Q8EBS1"/>
<dbReference type="BioCyc" id="SONE211586:G1GMP-3199-MONOMER"/>
<dbReference type="Proteomes" id="UP000008186">
    <property type="component" value="Chromosome"/>
</dbReference>
<dbReference type="GO" id="GO:0005829">
    <property type="term" value="C:cytosol"/>
    <property type="evidence" value="ECO:0000318"/>
    <property type="project" value="GO_Central"/>
</dbReference>
<dbReference type="GO" id="GO:0004813">
    <property type="term" value="F:alanine-tRNA ligase activity"/>
    <property type="evidence" value="ECO:0000318"/>
    <property type="project" value="GO_Central"/>
</dbReference>
<dbReference type="GO" id="GO:0002161">
    <property type="term" value="F:aminoacyl-tRNA deacylase activity"/>
    <property type="evidence" value="ECO:0000318"/>
    <property type="project" value="GO_Central"/>
</dbReference>
<dbReference type="GO" id="GO:0005524">
    <property type="term" value="F:ATP binding"/>
    <property type="evidence" value="ECO:0007669"/>
    <property type="project" value="UniProtKB-UniRule"/>
</dbReference>
<dbReference type="GO" id="GO:0000049">
    <property type="term" value="F:tRNA binding"/>
    <property type="evidence" value="ECO:0007669"/>
    <property type="project" value="UniProtKB-KW"/>
</dbReference>
<dbReference type="GO" id="GO:0008270">
    <property type="term" value="F:zinc ion binding"/>
    <property type="evidence" value="ECO:0007669"/>
    <property type="project" value="UniProtKB-UniRule"/>
</dbReference>
<dbReference type="GO" id="GO:0006419">
    <property type="term" value="P:alanyl-tRNA aminoacylation"/>
    <property type="evidence" value="ECO:0000318"/>
    <property type="project" value="GO_Central"/>
</dbReference>
<dbReference type="GO" id="GO:0045892">
    <property type="term" value="P:negative regulation of DNA-templated transcription"/>
    <property type="evidence" value="ECO:0000318"/>
    <property type="project" value="GO_Central"/>
</dbReference>
<dbReference type="CDD" id="cd00673">
    <property type="entry name" value="AlaRS_core"/>
    <property type="match status" value="1"/>
</dbReference>
<dbReference type="FunFam" id="2.40.30.130:FF:000001">
    <property type="entry name" value="Alanine--tRNA ligase"/>
    <property type="match status" value="1"/>
</dbReference>
<dbReference type="FunFam" id="3.10.310.40:FF:000001">
    <property type="entry name" value="Alanine--tRNA ligase"/>
    <property type="match status" value="1"/>
</dbReference>
<dbReference type="FunFam" id="3.30.54.20:FF:000001">
    <property type="entry name" value="Alanine--tRNA ligase"/>
    <property type="match status" value="1"/>
</dbReference>
<dbReference type="FunFam" id="3.30.930.10:FF:000004">
    <property type="entry name" value="Alanine--tRNA ligase"/>
    <property type="match status" value="1"/>
</dbReference>
<dbReference type="FunFam" id="3.30.980.10:FF:000004">
    <property type="entry name" value="Alanine--tRNA ligase, cytoplasmic"/>
    <property type="match status" value="1"/>
</dbReference>
<dbReference type="Gene3D" id="2.40.30.130">
    <property type="match status" value="1"/>
</dbReference>
<dbReference type="Gene3D" id="3.10.310.40">
    <property type="match status" value="1"/>
</dbReference>
<dbReference type="Gene3D" id="3.30.54.20">
    <property type="match status" value="1"/>
</dbReference>
<dbReference type="Gene3D" id="6.10.250.550">
    <property type="match status" value="1"/>
</dbReference>
<dbReference type="Gene3D" id="3.30.930.10">
    <property type="entry name" value="Bira Bifunctional Protein, Domain 2"/>
    <property type="match status" value="1"/>
</dbReference>
<dbReference type="Gene3D" id="3.30.980.10">
    <property type="entry name" value="Threonyl-trna Synthetase, Chain A, domain 2"/>
    <property type="match status" value="1"/>
</dbReference>
<dbReference type="HAMAP" id="MF_00036_B">
    <property type="entry name" value="Ala_tRNA_synth_B"/>
    <property type="match status" value="1"/>
</dbReference>
<dbReference type="InterPro" id="IPR045864">
    <property type="entry name" value="aa-tRNA-synth_II/BPL/LPL"/>
</dbReference>
<dbReference type="InterPro" id="IPR002318">
    <property type="entry name" value="Ala-tRNA-lgiase_IIc"/>
</dbReference>
<dbReference type="InterPro" id="IPR018162">
    <property type="entry name" value="Ala-tRNA-ligase_IIc_anticod-bd"/>
</dbReference>
<dbReference type="InterPro" id="IPR018165">
    <property type="entry name" value="Ala-tRNA-synth_IIc_core"/>
</dbReference>
<dbReference type="InterPro" id="IPR018164">
    <property type="entry name" value="Ala-tRNA-synth_IIc_N"/>
</dbReference>
<dbReference type="InterPro" id="IPR050058">
    <property type="entry name" value="Ala-tRNA_ligase"/>
</dbReference>
<dbReference type="InterPro" id="IPR023033">
    <property type="entry name" value="Ala_tRNA_ligase_euk/bac"/>
</dbReference>
<dbReference type="InterPro" id="IPR003156">
    <property type="entry name" value="DHHA1_dom"/>
</dbReference>
<dbReference type="InterPro" id="IPR018163">
    <property type="entry name" value="Thr/Ala-tRNA-synth_IIc_edit"/>
</dbReference>
<dbReference type="InterPro" id="IPR009000">
    <property type="entry name" value="Transl_B-barrel_sf"/>
</dbReference>
<dbReference type="InterPro" id="IPR012947">
    <property type="entry name" value="tRNA_SAD"/>
</dbReference>
<dbReference type="NCBIfam" id="TIGR00344">
    <property type="entry name" value="alaS"/>
    <property type="match status" value="1"/>
</dbReference>
<dbReference type="PANTHER" id="PTHR11777:SF9">
    <property type="entry name" value="ALANINE--TRNA LIGASE, CYTOPLASMIC"/>
    <property type="match status" value="1"/>
</dbReference>
<dbReference type="PANTHER" id="PTHR11777">
    <property type="entry name" value="ALANYL-TRNA SYNTHETASE"/>
    <property type="match status" value="1"/>
</dbReference>
<dbReference type="Pfam" id="PF02272">
    <property type="entry name" value="DHHA1"/>
    <property type="match status" value="1"/>
</dbReference>
<dbReference type="Pfam" id="PF01411">
    <property type="entry name" value="tRNA-synt_2c"/>
    <property type="match status" value="1"/>
</dbReference>
<dbReference type="Pfam" id="PF07973">
    <property type="entry name" value="tRNA_SAD"/>
    <property type="match status" value="1"/>
</dbReference>
<dbReference type="PRINTS" id="PR00980">
    <property type="entry name" value="TRNASYNTHALA"/>
</dbReference>
<dbReference type="SMART" id="SM00863">
    <property type="entry name" value="tRNA_SAD"/>
    <property type="match status" value="1"/>
</dbReference>
<dbReference type="SUPFAM" id="SSF55681">
    <property type="entry name" value="Class II aaRS and biotin synthetases"/>
    <property type="match status" value="1"/>
</dbReference>
<dbReference type="SUPFAM" id="SSF101353">
    <property type="entry name" value="Putative anticodon-binding domain of alanyl-tRNA synthetase (AlaRS)"/>
    <property type="match status" value="1"/>
</dbReference>
<dbReference type="SUPFAM" id="SSF55186">
    <property type="entry name" value="ThrRS/AlaRS common domain"/>
    <property type="match status" value="1"/>
</dbReference>
<dbReference type="SUPFAM" id="SSF50447">
    <property type="entry name" value="Translation proteins"/>
    <property type="match status" value="1"/>
</dbReference>
<dbReference type="PROSITE" id="PS50860">
    <property type="entry name" value="AA_TRNA_LIGASE_II_ALA"/>
    <property type="match status" value="1"/>
</dbReference>
<name>SYA_SHEON</name>
<accession>Q8EBS1</accession>